<accession>A9KF43</accession>
<dbReference type="EMBL" id="CP000733">
    <property type="protein sequence ID" value="ABS77055.1"/>
    <property type="molecule type" value="Genomic_DNA"/>
</dbReference>
<dbReference type="SMR" id="A9KF43"/>
<dbReference type="KEGG" id="cbd:CBUD_0422"/>
<dbReference type="HOGENOM" id="CLU_062974_2_2_6"/>
<dbReference type="Proteomes" id="UP000008555">
    <property type="component" value="Chromosome"/>
</dbReference>
<dbReference type="GO" id="GO:0005829">
    <property type="term" value="C:cytosol"/>
    <property type="evidence" value="ECO:0007669"/>
    <property type="project" value="TreeGrafter"/>
</dbReference>
<dbReference type="GO" id="GO:0003677">
    <property type="term" value="F:DNA binding"/>
    <property type="evidence" value="ECO:0007669"/>
    <property type="project" value="UniProtKB-UniRule"/>
</dbReference>
<dbReference type="GO" id="GO:0006355">
    <property type="term" value="P:regulation of DNA-templated transcription"/>
    <property type="evidence" value="ECO:0007669"/>
    <property type="project" value="UniProtKB-UniRule"/>
</dbReference>
<dbReference type="FunFam" id="1.10.10.200:FF:000001">
    <property type="entry name" value="Probable transcriptional regulatory protein YebC"/>
    <property type="match status" value="1"/>
</dbReference>
<dbReference type="FunFam" id="3.30.70.980:FF:000002">
    <property type="entry name" value="Probable transcriptional regulatory protein YebC"/>
    <property type="match status" value="1"/>
</dbReference>
<dbReference type="Gene3D" id="1.10.10.200">
    <property type="match status" value="1"/>
</dbReference>
<dbReference type="Gene3D" id="3.30.70.980">
    <property type="match status" value="2"/>
</dbReference>
<dbReference type="HAMAP" id="MF_00693">
    <property type="entry name" value="Transcrip_reg_TACO1"/>
    <property type="match status" value="1"/>
</dbReference>
<dbReference type="InterPro" id="IPR017856">
    <property type="entry name" value="Integrase-like_N"/>
</dbReference>
<dbReference type="InterPro" id="IPR048300">
    <property type="entry name" value="TACO1_YebC-like_2nd/3rd_dom"/>
</dbReference>
<dbReference type="InterPro" id="IPR049083">
    <property type="entry name" value="TACO1_YebC_N"/>
</dbReference>
<dbReference type="InterPro" id="IPR002876">
    <property type="entry name" value="Transcrip_reg_TACO1-like"/>
</dbReference>
<dbReference type="InterPro" id="IPR026564">
    <property type="entry name" value="Transcrip_reg_TACO1-like_dom3"/>
</dbReference>
<dbReference type="InterPro" id="IPR029072">
    <property type="entry name" value="YebC-like"/>
</dbReference>
<dbReference type="NCBIfam" id="NF001030">
    <property type="entry name" value="PRK00110.1"/>
    <property type="match status" value="1"/>
</dbReference>
<dbReference type="NCBIfam" id="NF009044">
    <property type="entry name" value="PRK12378.1"/>
    <property type="match status" value="1"/>
</dbReference>
<dbReference type="NCBIfam" id="TIGR01033">
    <property type="entry name" value="YebC/PmpR family DNA-binding transcriptional regulator"/>
    <property type="match status" value="1"/>
</dbReference>
<dbReference type="PANTHER" id="PTHR12532:SF6">
    <property type="entry name" value="TRANSCRIPTIONAL REGULATORY PROTEIN YEBC-RELATED"/>
    <property type="match status" value="1"/>
</dbReference>
<dbReference type="PANTHER" id="PTHR12532">
    <property type="entry name" value="TRANSLATIONAL ACTIVATOR OF CYTOCHROME C OXIDASE 1"/>
    <property type="match status" value="1"/>
</dbReference>
<dbReference type="Pfam" id="PF20772">
    <property type="entry name" value="TACO1_YebC_N"/>
    <property type="match status" value="1"/>
</dbReference>
<dbReference type="Pfam" id="PF01709">
    <property type="entry name" value="Transcrip_reg"/>
    <property type="match status" value="1"/>
</dbReference>
<dbReference type="SUPFAM" id="SSF75625">
    <property type="entry name" value="YebC-like"/>
    <property type="match status" value="1"/>
</dbReference>
<gene>
    <name type="ordered locus">CBUD_0422</name>
</gene>
<proteinExistence type="inferred from homology"/>
<keyword id="KW-0963">Cytoplasm</keyword>
<keyword id="KW-0238">DNA-binding</keyword>
<keyword id="KW-0804">Transcription</keyword>
<keyword id="KW-0805">Transcription regulation</keyword>
<reference key="1">
    <citation type="journal article" date="2009" name="Infect. Immun.">
        <title>Comparative genomics reveal extensive transposon-mediated genomic plasticity and diversity among potential effector proteins within the genus Coxiella.</title>
        <authorList>
            <person name="Beare P.A."/>
            <person name="Unsworth N."/>
            <person name="Andoh M."/>
            <person name="Voth D.E."/>
            <person name="Omsland A."/>
            <person name="Gilk S.D."/>
            <person name="Williams K.P."/>
            <person name="Sobral B.W."/>
            <person name="Kupko J.J. III"/>
            <person name="Porcella S.F."/>
            <person name="Samuel J.E."/>
            <person name="Heinzen R.A."/>
        </authorList>
    </citation>
    <scope>NUCLEOTIDE SEQUENCE [LARGE SCALE GENOMIC DNA]</scope>
    <source>
        <strain>Dugway 5J108-111</strain>
    </source>
</reference>
<protein>
    <recommendedName>
        <fullName evidence="1">Probable transcriptional regulatory protein CBUD_0422</fullName>
    </recommendedName>
</protein>
<sequence>MAGHSKWANIKHAKARQDAKRGKVFTKLIREITVAARLGGEDIDSNPRLRAVVDKAFAANMPKDTITRAIKRGAGSGAGDNLVEVRYEGYGPSGVAVMVDCLTDNKNRTVAEVRHAFSKCDGNLGTEGSVAYLFKQRGLITFPPNSDEEKIMEIALEVGAEDVTTNDDGSIDVTTLPEDFEKIRNAMKAADLNPSHAEVTVLASTEVGLDKDSAEQMLRLTEMLEDLDDVQNVYSNADYPEEVL</sequence>
<name>Y422_COXBN</name>
<feature type="chain" id="PRO_1000083151" description="Probable transcriptional regulatory protein CBUD_0422">
    <location>
        <begin position="1"/>
        <end position="244"/>
    </location>
</feature>
<evidence type="ECO:0000255" key="1">
    <source>
        <dbReference type="HAMAP-Rule" id="MF_00693"/>
    </source>
</evidence>
<organism>
    <name type="scientific">Coxiella burnetii (strain Dugway 5J108-111)</name>
    <dbReference type="NCBI Taxonomy" id="434922"/>
    <lineage>
        <taxon>Bacteria</taxon>
        <taxon>Pseudomonadati</taxon>
        <taxon>Pseudomonadota</taxon>
        <taxon>Gammaproteobacteria</taxon>
        <taxon>Legionellales</taxon>
        <taxon>Coxiellaceae</taxon>
        <taxon>Coxiella</taxon>
    </lineage>
</organism>
<comment type="subcellular location">
    <subcellularLocation>
        <location evidence="1">Cytoplasm</location>
    </subcellularLocation>
</comment>
<comment type="similarity">
    <text evidence="1">Belongs to the TACO1 family.</text>
</comment>